<dbReference type="EC" id="3.1.21.10" evidence="1"/>
<dbReference type="EMBL" id="BA000045">
    <property type="protein sequence ID" value="BAC91241.1"/>
    <property type="molecule type" value="Genomic_DNA"/>
</dbReference>
<dbReference type="RefSeq" id="NP_926246.1">
    <property type="nucleotide sequence ID" value="NC_005125.1"/>
</dbReference>
<dbReference type="RefSeq" id="WP_011143290.1">
    <property type="nucleotide sequence ID" value="NC_005125.1"/>
</dbReference>
<dbReference type="SMR" id="Q7NG73"/>
<dbReference type="FunCoup" id="Q7NG73">
    <property type="interactions" value="41"/>
</dbReference>
<dbReference type="STRING" id="251221.gene:10760810"/>
<dbReference type="EnsemblBacteria" id="BAC91241">
    <property type="protein sequence ID" value="BAC91241"/>
    <property type="gene ID" value="BAC91241"/>
</dbReference>
<dbReference type="KEGG" id="gvi:gll3300"/>
<dbReference type="PATRIC" id="fig|251221.4.peg.3332"/>
<dbReference type="eggNOG" id="COG0817">
    <property type="taxonomic scope" value="Bacteria"/>
</dbReference>
<dbReference type="HOGENOM" id="CLU_091257_3_1_3"/>
<dbReference type="InParanoid" id="Q7NG73"/>
<dbReference type="OrthoDB" id="9805499at2"/>
<dbReference type="PhylomeDB" id="Q7NG73"/>
<dbReference type="Proteomes" id="UP000000557">
    <property type="component" value="Chromosome"/>
</dbReference>
<dbReference type="GO" id="GO:0005737">
    <property type="term" value="C:cytoplasm"/>
    <property type="evidence" value="ECO:0007669"/>
    <property type="project" value="UniProtKB-SubCell"/>
</dbReference>
<dbReference type="GO" id="GO:0048476">
    <property type="term" value="C:Holliday junction resolvase complex"/>
    <property type="evidence" value="ECO:0007669"/>
    <property type="project" value="UniProtKB-UniRule"/>
</dbReference>
<dbReference type="GO" id="GO:0008821">
    <property type="term" value="F:crossover junction DNA endonuclease activity"/>
    <property type="evidence" value="ECO:0007669"/>
    <property type="project" value="UniProtKB-UniRule"/>
</dbReference>
<dbReference type="GO" id="GO:0003677">
    <property type="term" value="F:DNA binding"/>
    <property type="evidence" value="ECO:0007669"/>
    <property type="project" value="UniProtKB-KW"/>
</dbReference>
<dbReference type="GO" id="GO:0000287">
    <property type="term" value="F:magnesium ion binding"/>
    <property type="evidence" value="ECO:0007669"/>
    <property type="project" value="UniProtKB-UniRule"/>
</dbReference>
<dbReference type="GO" id="GO:0006310">
    <property type="term" value="P:DNA recombination"/>
    <property type="evidence" value="ECO:0007669"/>
    <property type="project" value="UniProtKB-UniRule"/>
</dbReference>
<dbReference type="GO" id="GO:0006281">
    <property type="term" value="P:DNA repair"/>
    <property type="evidence" value="ECO:0007669"/>
    <property type="project" value="UniProtKB-UniRule"/>
</dbReference>
<dbReference type="CDD" id="cd16962">
    <property type="entry name" value="RuvC"/>
    <property type="match status" value="1"/>
</dbReference>
<dbReference type="FunFam" id="3.30.420.10:FF:000002">
    <property type="entry name" value="Crossover junction endodeoxyribonuclease RuvC"/>
    <property type="match status" value="1"/>
</dbReference>
<dbReference type="Gene3D" id="3.30.420.10">
    <property type="entry name" value="Ribonuclease H-like superfamily/Ribonuclease H"/>
    <property type="match status" value="1"/>
</dbReference>
<dbReference type="HAMAP" id="MF_00034">
    <property type="entry name" value="RuvC"/>
    <property type="match status" value="1"/>
</dbReference>
<dbReference type="InterPro" id="IPR012337">
    <property type="entry name" value="RNaseH-like_sf"/>
</dbReference>
<dbReference type="InterPro" id="IPR036397">
    <property type="entry name" value="RNaseH_sf"/>
</dbReference>
<dbReference type="InterPro" id="IPR020563">
    <property type="entry name" value="X-over_junc_endoDNase_Mg_BS"/>
</dbReference>
<dbReference type="InterPro" id="IPR002176">
    <property type="entry name" value="X-over_junc_endoDNase_RuvC"/>
</dbReference>
<dbReference type="NCBIfam" id="NF000711">
    <property type="entry name" value="PRK00039.2-1"/>
    <property type="match status" value="1"/>
</dbReference>
<dbReference type="PANTHER" id="PTHR30194">
    <property type="entry name" value="CROSSOVER JUNCTION ENDODEOXYRIBONUCLEASE RUVC"/>
    <property type="match status" value="1"/>
</dbReference>
<dbReference type="PANTHER" id="PTHR30194:SF3">
    <property type="entry name" value="CROSSOVER JUNCTION ENDODEOXYRIBONUCLEASE RUVC"/>
    <property type="match status" value="1"/>
</dbReference>
<dbReference type="Pfam" id="PF02075">
    <property type="entry name" value="RuvC"/>
    <property type="match status" value="1"/>
</dbReference>
<dbReference type="PRINTS" id="PR00696">
    <property type="entry name" value="RSOLVASERUVC"/>
</dbReference>
<dbReference type="SUPFAM" id="SSF53098">
    <property type="entry name" value="Ribonuclease H-like"/>
    <property type="match status" value="1"/>
</dbReference>
<dbReference type="PROSITE" id="PS01321">
    <property type="entry name" value="RUVC"/>
    <property type="match status" value="1"/>
</dbReference>
<sequence length="173" mass="18471">MCGMRILGLDPGVAILGYGVLDFFDSAPPVVCDYGIVQTSAKTAFEARLAAIYEDINSLFSAHKPDLVAIEKLFFYKMGNTISVAQARGVVLLCAAQHGVPYVEFSPPQVKLALTGDGRADKRAIQEAVQRELGLITMPKPDDAADALAIALTGWFHHLPPAAREAVPAYSVG</sequence>
<keyword id="KW-0963">Cytoplasm</keyword>
<keyword id="KW-0227">DNA damage</keyword>
<keyword id="KW-0233">DNA recombination</keyword>
<keyword id="KW-0234">DNA repair</keyword>
<keyword id="KW-0238">DNA-binding</keyword>
<keyword id="KW-0255">Endonuclease</keyword>
<keyword id="KW-0378">Hydrolase</keyword>
<keyword id="KW-0460">Magnesium</keyword>
<keyword id="KW-0479">Metal-binding</keyword>
<keyword id="KW-0540">Nuclease</keyword>
<keyword id="KW-1185">Reference proteome</keyword>
<gene>
    <name evidence="1" type="primary">ruvC</name>
    <name type="ordered locus">gll3300</name>
</gene>
<reference key="1">
    <citation type="journal article" date="2003" name="DNA Res.">
        <title>Complete genome structure of Gloeobacter violaceus PCC 7421, a cyanobacterium that lacks thylakoids.</title>
        <authorList>
            <person name="Nakamura Y."/>
            <person name="Kaneko T."/>
            <person name="Sato S."/>
            <person name="Mimuro M."/>
            <person name="Miyashita H."/>
            <person name="Tsuchiya T."/>
            <person name="Sasamoto S."/>
            <person name="Watanabe A."/>
            <person name="Kawashima K."/>
            <person name="Kishida Y."/>
            <person name="Kiyokawa C."/>
            <person name="Kohara M."/>
            <person name="Matsumoto M."/>
            <person name="Matsuno A."/>
            <person name="Nakazaki N."/>
            <person name="Shimpo S."/>
            <person name="Takeuchi C."/>
            <person name="Yamada M."/>
            <person name="Tabata S."/>
        </authorList>
    </citation>
    <scope>NUCLEOTIDE SEQUENCE [LARGE SCALE GENOMIC DNA]</scope>
    <source>
        <strain>ATCC 29082 / PCC 7421</strain>
    </source>
</reference>
<evidence type="ECO:0000255" key="1">
    <source>
        <dbReference type="HAMAP-Rule" id="MF_00034"/>
    </source>
</evidence>
<accession>Q7NG73</accession>
<comment type="function">
    <text evidence="1">The RuvA-RuvB-RuvC complex processes Holliday junction (HJ) DNA during genetic recombination and DNA repair. Endonuclease that resolves HJ intermediates. Cleaves cruciform DNA by making single-stranded nicks across the HJ at symmetrical positions within the homologous arms, yielding a 5'-phosphate and a 3'-hydroxyl group; requires a central core of homology in the junction. The consensus cleavage sequence is 5'-(A/T)TT(C/G)-3'. Cleavage occurs on the 3'-side of the TT dinucleotide at the point of strand exchange. HJ branch migration catalyzed by RuvA-RuvB allows RuvC to scan DNA until it finds its consensus sequence, where it cleaves and resolves the cruciform DNA.</text>
</comment>
<comment type="catalytic activity">
    <reaction evidence="1">
        <text>Endonucleolytic cleavage at a junction such as a reciprocal single-stranded crossover between two homologous DNA duplexes (Holliday junction).</text>
        <dbReference type="EC" id="3.1.21.10"/>
    </reaction>
</comment>
<comment type="cofactor">
    <cofactor evidence="1">
        <name>Mg(2+)</name>
        <dbReference type="ChEBI" id="CHEBI:18420"/>
    </cofactor>
    <text evidence="1">Binds 2 Mg(2+) ion per subunit.</text>
</comment>
<comment type="subunit">
    <text evidence="1">Homodimer which binds Holliday junction (HJ) DNA. The HJ becomes 2-fold symmetrical on binding to RuvC with unstacked arms; it has a different conformation from HJ DNA in complex with RuvA. In the full resolvosome a probable DNA-RuvA(4)-RuvB(12)-RuvC(2) complex forms which resolves the HJ.</text>
</comment>
<comment type="subcellular location">
    <subcellularLocation>
        <location evidence="1">Cytoplasm</location>
    </subcellularLocation>
</comment>
<comment type="similarity">
    <text evidence="1">Belongs to the RuvC family.</text>
</comment>
<proteinExistence type="inferred from homology"/>
<name>RUVC_GLOVI</name>
<protein>
    <recommendedName>
        <fullName evidence="1">Crossover junction endodeoxyribonuclease RuvC</fullName>
        <ecNumber evidence="1">3.1.21.10</ecNumber>
    </recommendedName>
    <alternativeName>
        <fullName evidence="1">Holliday junction nuclease RuvC</fullName>
    </alternativeName>
    <alternativeName>
        <fullName evidence="1">Holliday junction resolvase RuvC</fullName>
    </alternativeName>
</protein>
<organism>
    <name type="scientific">Gloeobacter violaceus (strain ATCC 29082 / PCC 7421)</name>
    <dbReference type="NCBI Taxonomy" id="251221"/>
    <lineage>
        <taxon>Bacteria</taxon>
        <taxon>Bacillati</taxon>
        <taxon>Cyanobacteriota</taxon>
        <taxon>Cyanophyceae</taxon>
        <taxon>Gloeobacterales</taxon>
        <taxon>Gloeobacteraceae</taxon>
        <taxon>Gloeobacter</taxon>
    </lineage>
</organism>
<feature type="chain" id="PRO_0000183100" description="Crossover junction endodeoxyribonuclease RuvC">
    <location>
        <begin position="1"/>
        <end position="173"/>
    </location>
</feature>
<feature type="active site" evidence="1">
    <location>
        <position position="10"/>
    </location>
</feature>
<feature type="active site" evidence="1">
    <location>
        <position position="71"/>
    </location>
</feature>
<feature type="active site" evidence="1">
    <location>
        <position position="143"/>
    </location>
</feature>
<feature type="binding site" evidence="1">
    <location>
        <position position="10"/>
    </location>
    <ligand>
        <name>Mg(2+)</name>
        <dbReference type="ChEBI" id="CHEBI:18420"/>
        <label>1</label>
    </ligand>
</feature>
<feature type="binding site" evidence="1">
    <location>
        <position position="71"/>
    </location>
    <ligand>
        <name>Mg(2+)</name>
        <dbReference type="ChEBI" id="CHEBI:18420"/>
        <label>2</label>
    </ligand>
</feature>
<feature type="binding site" evidence="1">
    <location>
        <position position="143"/>
    </location>
    <ligand>
        <name>Mg(2+)</name>
        <dbReference type="ChEBI" id="CHEBI:18420"/>
        <label>1</label>
    </ligand>
</feature>